<sequence length="1299" mass="150070">MAAETQTLNFGPEWLRALSSGGSITSPPLSPALPKYKLADYRYGREEMLALFLKDNKIPSDLLDKEFLPILQEEPLPPLALVPFTEEEQRNFSMSVNSAAVLRLTGRGGGGTVVGAPRGRSSSRGRGRGRGECGFYQRSFDEVEGVFGRGGGREMHRSQSWEERGDRRFEKPGRKDVGRPNFEEGGPTSVGRKHEFIRSESENWRIFREEQNGEDEDGGWRLAGSRRDGERWRPHSPDGPRSAGWREHMERRRRFEFDFRDRDDERGYRRVRSGSGSIDDDRDSLPEWCLEDAEEEMGTFDSSGAFLSLKKVQKEPIPEEQEMDFRPVDEGEECSDSEGSHNEEAKEPDKTNKKEGEKTDRVGVEASEETPQTSSSSARPGTPSDHQSQEASQFERKDEPKTEQTEKAEEETRMENSLPAKVPSRGDEMVADVQQPLSQIPSDTASPLLILPPPVPNPSPTLRPVETPVVGAPGMGSVSTEPDDEEGLKHLEQQAEKMVAYLQDSALDDERLASKLQEHRAKGVSIPLMHEAMQKWYYKDPQGEIQGPFNNQEMAEWFQAGYFTMSLLVKRACDESFQPLGDIMKMWGRVPFSPGPAPPPHMGELDQERLTRQQELTALYQMQHLQYQQFLIQQQYAQVLAQQQKAALSSQQQQQLALLLQQFQTLKMRISDQNIIPSVTRSVSVPDTGSIWELQPTASQPTVWEGGSVWDLPLDTTTPGPALEQLQQLEKAKAAKLEQERREAEMRAKREEEERKRQEELRRQQEEILRRQQEEERKRREEEELARRKQEEALRRQREQEIALRRQREEEERQQQEEALRRLEERRREEEERRKQEELLRKQEEEAAKWAREEEEAQRRLEENRLRMEEEAARLRHEEEERKRKELEVQRQKELMRQRQQQQEALRRLQQQQQQQQLAQMKLPSSSTWGQQSNTTACQSQATLSLAEIQKLEEERERQLREEQRRQQRELMKALQQQQQQQQQKLSGWGNVSKPSGTTKSLLEIQQEEARQMQKQQQQQQQHQQPNRARNNTHSNLHTSIGNSVWGSINTGPPNQWASDLVSSIWSNADTKNSNMGFWDDAVKEVGPRNSTNKNKNNASLSKSVGVSNRQNKKVEEEEKLLKLFQGVNKAQDGFTQWCEQMLHALNTANNLDVPTFVSFLKEVESPYEVHDYIRAYLGDTSEAKEFAKQFLERRAKQKANQQRQQQQLPQQQQQQPPQQPPQQPQQQDSVWGMNHSTLHSVFQTNQSNNQQSNFEAVQSGKKKKKQKMVRADPSLLGFSVNASSERLNMGEIETLDDY</sequence>
<accession>Q6Y7W6</accession>
<accession>A6H8W4</accession>
<accession>B9EG55</accession>
<accession>E9PBB0</accession>
<accession>O75137</accession>
<accession>Q7Z2Z8</accession>
<accession>Q7Z3I2</accession>
<accession>Q96HU4</accession>
<accession>Q9NV82</accession>
<gene>
    <name evidence="23 29" type="primary">GIGYF2</name>
    <name evidence="26" type="synonym">KIAA0642</name>
    <name type="synonym">PERQ2</name>
    <name evidence="25" type="synonym">TNRC15</name>
</gene>
<reference key="1">
    <citation type="journal article" date="2003" name="J. Biol. Chem.">
        <title>Two novel proteins that are linked to insulin-like growth factor (IGF-I) receptors by the Grb10 adapter and modulate IGF-I signaling.</title>
        <authorList>
            <person name="Giovannone B."/>
            <person name="Lee E."/>
            <person name="Laviola L."/>
            <person name="Giorgino F."/>
            <person name="Cleveland K.A."/>
            <person name="Smith R.J."/>
        </authorList>
    </citation>
    <scope>NUCLEOTIDE SEQUENCE [MRNA] (ISOFORM 1)</scope>
    <scope>FUNCTION</scope>
    <source>
        <tissue>Kidney</tissue>
    </source>
</reference>
<reference key="2">
    <citation type="journal article" date="1998" name="DNA Res.">
        <title>Prediction of the coding sequences of unidentified human genes. X. The complete sequences of 100 new cDNA clones from brain which can code for large proteins in vitro.</title>
        <authorList>
            <person name="Ishikawa K."/>
            <person name="Nagase T."/>
            <person name="Suyama M."/>
            <person name="Miyajima N."/>
            <person name="Tanaka A."/>
            <person name="Kotani H."/>
            <person name="Nomura N."/>
            <person name="Ohara O."/>
        </authorList>
    </citation>
    <scope>NUCLEOTIDE SEQUENCE [LARGE SCALE MRNA] (ISOFORM 2)</scope>
    <source>
        <tissue>Brain</tissue>
    </source>
</reference>
<reference key="3">
    <citation type="journal article" date="2002" name="DNA Res.">
        <title>Construction of expression-ready cDNA clones for KIAA genes: manual curation of 330 KIAA cDNA clones.</title>
        <authorList>
            <person name="Nakajima D."/>
            <person name="Okazaki N."/>
            <person name="Yamakawa H."/>
            <person name="Kikuno R."/>
            <person name="Ohara O."/>
            <person name="Nagase T."/>
        </authorList>
    </citation>
    <scope>SEQUENCE REVISION</scope>
</reference>
<reference key="4">
    <citation type="submission" date="2003-06" db="EMBL/GenBank/DDBJ databases">
        <authorList>
            <person name="Lauber J."/>
            <person name="Bahr A."/>
            <person name="Mewes H.W."/>
            <person name="Weil B."/>
            <person name="Amid C."/>
            <person name="Osanger A."/>
            <person name="Fobo G."/>
            <person name="Han M."/>
            <person name="Wiemann S."/>
        </authorList>
    </citation>
    <scope>NUCLEOTIDE SEQUENCE [LARGE SCALE MRNA] (ISOFORM 3)</scope>
    <source>
        <tissue>Uterus</tissue>
    </source>
</reference>
<reference key="5">
    <citation type="journal article" date="2004" name="Nat. Genet.">
        <title>Complete sequencing and characterization of 21,243 full-length human cDNAs.</title>
        <authorList>
            <person name="Ota T."/>
            <person name="Suzuki Y."/>
            <person name="Nishikawa T."/>
            <person name="Otsuki T."/>
            <person name="Sugiyama T."/>
            <person name="Irie R."/>
            <person name="Wakamatsu A."/>
            <person name="Hayashi K."/>
            <person name="Sato H."/>
            <person name="Nagai K."/>
            <person name="Kimura K."/>
            <person name="Makita H."/>
            <person name="Sekine M."/>
            <person name="Obayashi M."/>
            <person name="Nishi T."/>
            <person name="Shibahara T."/>
            <person name="Tanaka T."/>
            <person name="Ishii S."/>
            <person name="Yamamoto J."/>
            <person name="Saito K."/>
            <person name="Kawai Y."/>
            <person name="Isono Y."/>
            <person name="Nakamura Y."/>
            <person name="Nagahari K."/>
            <person name="Murakami K."/>
            <person name="Yasuda T."/>
            <person name="Iwayanagi T."/>
            <person name="Wagatsuma M."/>
            <person name="Shiratori A."/>
            <person name="Sudo H."/>
            <person name="Hosoiri T."/>
            <person name="Kaku Y."/>
            <person name="Kodaira H."/>
            <person name="Kondo H."/>
            <person name="Sugawara M."/>
            <person name="Takahashi M."/>
            <person name="Kanda K."/>
            <person name="Yokoi T."/>
            <person name="Furuya T."/>
            <person name="Kikkawa E."/>
            <person name="Omura Y."/>
            <person name="Abe K."/>
            <person name="Kamihara K."/>
            <person name="Katsuta N."/>
            <person name="Sato K."/>
            <person name="Tanikawa M."/>
            <person name="Yamazaki M."/>
            <person name="Ninomiya K."/>
            <person name="Ishibashi T."/>
            <person name="Yamashita H."/>
            <person name="Murakawa K."/>
            <person name="Fujimori K."/>
            <person name="Tanai H."/>
            <person name="Kimata M."/>
            <person name="Watanabe M."/>
            <person name="Hiraoka S."/>
            <person name="Chiba Y."/>
            <person name="Ishida S."/>
            <person name="Ono Y."/>
            <person name="Takiguchi S."/>
            <person name="Watanabe S."/>
            <person name="Yosida M."/>
            <person name="Hotuta T."/>
            <person name="Kusano J."/>
            <person name="Kanehori K."/>
            <person name="Takahashi-Fujii A."/>
            <person name="Hara H."/>
            <person name="Tanase T.-O."/>
            <person name="Nomura Y."/>
            <person name="Togiya S."/>
            <person name="Komai F."/>
            <person name="Hara R."/>
            <person name="Takeuchi K."/>
            <person name="Arita M."/>
            <person name="Imose N."/>
            <person name="Musashino K."/>
            <person name="Yuuki H."/>
            <person name="Oshima A."/>
            <person name="Sasaki N."/>
            <person name="Aotsuka S."/>
            <person name="Yoshikawa Y."/>
            <person name="Matsunawa H."/>
            <person name="Ichihara T."/>
            <person name="Shiohata N."/>
            <person name="Sano S."/>
            <person name="Moriya S."/>
            <person name="Momiyama H."/>
            <person name="Satoh N."/>
            <person name="Takami S."/>
            <person name="Terashima Y."/>
            <person name="Suzuki O."/>
            <person name="Nakagawa S."/>
            <person name="Senoh A."/>
            <person name="Mizoguchi H."/>
            <person name="Goto Y."/>
            <person name="Shimizu F."/>
            <person name="Wakebe H."/>
            <person name="Hishigaki H."/>
            <person name="Watanabe T."/>
            <person name="Sugiyama A."/>
            <person name="Takemoto M."/>
            <person name="Kawakami B."/>
            <person name="Yamazaki M."/>
            <person name="Watanabe K."/>
            <person name="Kumagai A."/>
            <person name="Itakura S."/>
            <person name="Fukuzumi Y."/>
            <person name="Fujimori Y."/>
            <person name="Komiyama M."/>
            <person name="Tashiro H."/>
            <person name="Tanigami A."/>
            <person name="Fujiwara T."/>
            <person name="Ono T."/>
            <person name="Yamada K."/>
            <person name="Fujii Y."/>
            <person name="Ozaki K."/>
            <person name="Hirao M."/>
            <person name="Ohmori Y."/>
            <person name="Kawabata A."/>
            <person name="Hikiji T."/>
            <person name="Kobatake N."/>
            <person name="Inagaki H."/>
            <person name="Ikema Y."/>
            <person name="Okamoto S."/>
            <person name="Okitani R."/>
            <person name="Kawakami T."/>
            <person name="Noguchi S."/>
            <person name="Itoh T."/>
            <person name="Shigeta K."/>
            <person name="Senba T."/>
            <person name="Matsumura K."/>
            <person name="Nakajima Y."/>
            <person name="Mizuno T."/>
            <person name="Morinaga M."/>
            <person name="Sasaki M."/>
            <person name="Togashi T."/>
            <person name="Oyama M."/>
            <person name="Hata H."/>
            <person name="Watanabe M."/>
            <person name="Komatsu T."/>
            <person name="Mizushima-Sugano J."/>
            <person name="Satoh T."/>
            <person name="Shirai Y."/>
            <person name="Takahashi Y."/>
            <person name="Nakagawa K."/>
            <person name="Okumura K."/>
            <person name="Nagase T."/>
            <person name="Nomura N."/>
            <person name="Kikuchi H."/>
            <person name="Masuho Y."/>
            <person name="Yamashita R."/>
            <person name="Nakai K."/>
            <person name="Yada T."/>
            <person name="Nakamura Y."/>
            <person name="Ohara O."/>
            <person name="Isogai T."/>
            <person name="Sugano S."/>
        </authorList>
    </citation>
    <scope>NUCLEOTIDE SEQUENCE [LARGE SCALE MRNA] OF 1-1096 (ISOFORM 1)</scope>
    <source>
        <tissue>Teratocarcinoma</tissue>
    </source>
</reference>
<reference key="6">
    <citation type="journal article" date="2007" name="BMC Genomics">
        <title>The full-ORF clone resource of the German cDNA consortium.</title>
        <authorList>
            <person name="Bechtel S."/>
            <person name="Rosenfelder H."/>
            <person name="Duda A."/>
            <person name="Schmidt C.P."/>
            <person name="Ernst U."/>
            <person name="Wellenreuther R."/>
            <person name="Mehrle A."/>
            <person name="Schuster C."/>
            <person name="Bahr A."/>
            <person name="Bloecker H."/>
            <person name="Heubner D."/>
            <person name="Hoerlein A."/>
            <person name="Michel G."/>
            <person name="Wedler H."/>
            <person name="Koehrer K."/>
            <person name="Ottenwaelder B."/>
            <person name="Poustka A."/>
            <person name="Wiemann S."/>
            <person name="Schupp I."/>
        </authorList>
    </citation>
    <scope>NUCLEOTIDE SEQUENCE [LARGE SCALE MRNA] (ISOFORM 1)</scope>
    <scope>VARIANT GLN-1211 DEL</scope>
    <source>
        <tissue>Fetal kidney</tissue>
        <tissue>Uterus</tissue>
    </source>
</reference>
<reference key="7">
    <citation type="journal article" date="2005" name="Nature">
        <title>Generation and annotation of the DNA sequences of human chromosomes 2 and 4.</title>
        <authorList>
            <person name="Hillier L.W."/>
            <person name="Graves T.A."/>
            <person name="Fulton R.S."/>
            <person name="Fulton L.A."/>
            <person name="Pepin K.H."/>
            <person name="Minx P."/>
            <person name="Wagner-McPherson C."/>
            <person name="Layman D."/>
            <person name="Wylie K."/>
            <person name="Sekhon M."/>
            <person name="Becker M.C."/>
            <person name="Fewell G.A."/>
            <person name="Delehaunty K.D."/>
            <person name="Miner T.L."/>
            <person name="Nash W.E."/>
            <person name="Kremitzki C."/>
            <person name="Oddy L."/>
            <person name="Du H."/>
            <person name="Sun H."/>
            <person name="Bradshaw-Cordum H."/>
            <person name="Ali J."/>
            <person name="Carter J."/>
            <person name="Cordes M."/>
            <person name="Harris A."/>
            <person name="Isak A."/>
            <person name="van Brunt A."/>
            <person name="Nguyen C."/>
            <person name="Du F."/>
            <person name="Courtney L."/>
            <person name="Kalicki J."/>
            <person name="Ozersky P."/>
            <person name="Abbott S."/>
            <person name="Armstrong J."/>
            <person name="Belter E.A."/>
            <person name="Caruso L."/>
            <person name="Cedroni M."/>
            <person name="Cotton M."/>
            <person name="Davidson T."/>
            <person name="Desai A."/>
            <person name="Elliott G."/>
            <person name="Erb T."/>
            <person name="Fronick C."/>
            <person name="Gaige T."/>
            <person name="Haakenson W."/>
            <person name="Haglund K."/>
            <person name="Holmes A."/>
            <person name="Harkins R."/>
            <person name="Kim K."/>
            <person name="Kruchowski S.S."/>
            <person name="Strong C.M."/>
            <person name="Grewal N."/>
            <person name="Goyea E."/>
            <person name="Hou S."/>
            <person name="Levy A."/>
            <person name="Martinka S."/>
            <person name="Mead K."/>
            <person name="McLellan M.D."/>
            <person name="Meyer R."/>
            <person name="Randall-Maher J."/>
            <person name="Tomlinson C."/>
            <person name="Dauphin-Kohlberg S."/>
            <person name="Kozlowicz-Reilly A."/>
            <person name="Shah N."/>
            <person name="Swearengen-Shahid S."/>
            <person name="Snider J."/>
            <person name="Strong J.T."/>
            <person name="Thompson J."/>
            <person name="Yoakum M."/>
            <person name="Leonard S."/>
            <person name="Pearman C."/>
            <person name="Trani L."/>
            <person name="Radionenko M."/>
            <person name="Waligorski J.E."/>
            <person name="Wang C."/>
            <person name="Rock S.M."/>
            <person name="Tin-Wollam A.-M."/>
            <person name="Maupin R."/>
            <person name="Latreille P."/>
            <person name="Wendl M.C."/>
            <person name="Yang S.-P."/>
            <person name="Pohl C."/>
            <person name="Wallis J.W."/>
            <person name="Spieth J."/>
            <person name="Bieri T.A."/>
            <person name="Berkowicz N."/>
            <person name="Nelson J.O."/>
            <person name="Osborne J."/>
            <person name="Ding L."/>
            <person name="Meyer R."/>
            <person name="Sabo A."/>
            <person name="Shotland Y."/>
            <person name="Sinha P."/>
            <person name="Wohldmann P.E."/>
            <person name="Cook L.L."/>
            <person name="Hickenbotham M.T."/>
            <person name="Eldred J."/>
            <person name="Williams D."/>
            <person name="Jones T.A."/>
            <person name="She X."/>
            <person name="Ciccarelli F.D."/>
            <person name="Izaurralde E."/>
            <person name="Taylor J."/>
            <person name="Schmutz J."/>
            <person name="Myers R.M."/>
            <person name="Cox D.R."/>
            <person name="Huang X."/>
            <person name="McPherson J.D."/>
            <person name="Mardis E.R."/>
            <person name="Clifton S.W."/>
            <person name="Warren W.C."/>
            <person name="Chinwalla A.T."/>
            <person name="Eddy S.R."/>
            <person name="Marra M.A."/>
            <person name="Ovcharenko I."/>
            <person name="Furey T.S."/>
            <person name="Miller W."/>
            <person name="Eichler E.E."/>
            <person name="Bork P."/>
            <person name="Suyama M."/>
            <person name="Torrents D."/>
            <person name="Waterston R.H."/>
            <person name="Wilson R.K."/>
        </authorList>
    </citation>
    <scope>NUCLEOTIDE SEQUENCE [LARGE SCALE GENOMIC DNA]</scope>
</reference>
<reference key="8">
    <citation type="submission" date="2005-07" db="EMBL/GenBank/DDBJ databases">
        <authorList>
            <person name="Mural R.J."/>
            <person name="Istrail S."/>
            <person name="Sutton G."/>
            <person name="Florea L."/>
            <person name="Halpern A.L."/>
            <person name="Mobarry C.M."/>
            <person name="Lippert R."/>
            <person name="Walenz B."/>
            <person name="Shatkay H."/>
            <person name="Dew I."/>
            <person name="Miller J.R."/>
            <person name="Flanigan M.J."/>
            <person name="Edwards N.J."/>
            <person name="Bolanos R."/>
            <person name="Fasulo D."/>
            <person name="Halldorsson B.V."/>
            <person name="Hannenhalli S."/>
            <person name="Turner R."/>
            <person name="Yooseph S."/>
            <person name="Lu F."/>
            <person name="Nusskern D.R."/>
            <person name="Shue B.C."/>
            <person name="Zheng X.H."/>
            <person name="Zhong F."/>
            <person name="Delcher A.L."/>
            <person name="Huson D.H."/>
            <person name="Kravitz S.A."/>
            <person name="Mouchard L."/>
            <person name="Reinert K."/>
            <person name="Remington K.A."/>
            <person name="Clark A.G."/>
            <person name="Waterman M.S."/>
            <person name="Eichler E.E."/>
            <person name="Adams M.D."/>
            <person name="Hunkapiller M.W."/>
            <person name="Myers E.W."/>
            <person name="Venter J.C."/>
        </authorList>
    </citation>
    <scope>NUCLEOTIDE SEQUENCE [LARGE SCALE GENOMIC DNA]</scope>
    <scope>VARIANT GLN-1211 DEL</scope>
</reference>
<reference key="9">
    <citation type="journal article" date="2004" name="Genome Res.">
        <title>The status, quality, and expansion of the NIH full-length cDNA project: the Mammalian Gene Collection (MGC).</title>
        <authorList>
            <consortium name="The MGC Project Team"/>
        </authorList>
    </citation>
    <scope>NUCLEOTIDE SEQUENCE [LARGE SCALE MRNA] (ISOFORMS 1 AND 2)</scope>
    <scope>VARIANT GLN-1211 DEL</scope>
    <source>
        <tissue>Lymph</tissue>
        <tissue>Testis</tissue>
    </source>
</reference>
<reference key="10">
    <citation type="journal article" date="2006" name="Cell">
        <title>Global, in vivo, and site-specific phosphorylation dynamics in signaling networks.</title>
        <authorList>
            <person name="Olsen J.V."/>
            <person name="Blagoev B."/>
            <person name="Gnad F."/>
            <person name="Macek B."/>
            <person name="Kumar C."/>
            <person name="Mortensen P."/>
            <person name="Mann M."/>
        </authorList>
    </citation>
    <scope>PHOSPHORYLATION [LARGE SCALE ANALYSIS] AT SER-236</scope>
    <scope>IDENTIFICATION BY MASS SPECTROMETRY [LARGE SCALE ANALYSIS]</scope>
    <source>
        <tissue>Cervix carcinoma</tissue>
    </source>
</reference>
<reference key="11">
    <citation type="journal article" date="2006" name="Nat. Biotechnol.">
        <title>A probability-based approach for high-throughput protein phosphorylation analysis and site localization.</title>
        <authorList>
            <person name="Beausoleil S.A."/>
            <person name="Villen J."/>
            <person name="Gerber S.A."/>
            <person name="Rush J."/>
            <person name="Gygi S.P."/>
        </authorList>
    </citation>
    <scope>PHOSPHORYLATION [LARGE SCALE ANALYSIS] AT SER-26</scope>
    <scope>IDENTIFICATION BY MASS SPECTROMETRY [LARGE SCALE ANALYSIS]</scope>
    <source>
        <tissue>Cervix carcinoma</tissue>
    </source>
</reference>
<reference key="12">
    <citation type="journal article" date="2008" name="J. Proteome Res.">
        <title>Combining protein-based IMAC, peptide-based IMAC, and MudPIT for efficient phosphoproteomic analysis.</title>
        <authorList>
            <person name="Cantin G.T."/>
            <person name="Yi W."/>
            <person name="Lu B."/>
            <person name="Park S.K."/>
            <person name="Xu T."/>
            <person name="Lee J.-D."/>
            <person name="Yates J.R. III"/>
        </authorList>
    </citation>
    <scope>PHOSPHORYLATION [LARGE SCALE ANALYSIS] AT SER-30</scope>
    <scope>IDENTIFICATION BY MASS SPECTROMETRY [LARGE SCALE ANALYSIS]</scope>
    <source>
        <tissue>Cervix carcinoma</tissue>
    </source>
</reference>
<reference key="13">
    <citation type="journal article" date="2008" name="Mol. Cell">
        <title>Kinase-selective enrichment enables quantitative phosphoproteomics of the kinome across the cell cycle.</title>
        <authorList>
            <person name="Daub H."/>
            <person name="Olsen J.V."/>
            <person name="Bairlein M."/>
            <person name="Gnad F."/>
            <person name="Oppermann F.S."/>
            <person name="Korner R."/>
            <person name="Greff Z."/>
            <person name="Keri G."/>
            <person name="Stemmann O."/>
            <person name="Mann M."/>
        </authorList>
    </citation>
    <scope>IDENTIFICATION BY MASS SPECTROMETRY [LARGE SCALE ANALYSIS]</scope>
    <source>
        <tissue>Cervix carcinoma</tissue>
    </source>
</reference>
<reference key="14">
    <citation type="journal article" date="2008" name="Proc. Natl. Acad. Sci. U.S.A.">
        <title>A quantitative atlas of mitotic phosphorylation.</title>
        <authorList>
            <person name="Dephoure N."/>
            <person name="Zhou C."/>
            <person name="Villen J."/>
            <person name="Beausoleil S.A."/>
            <person name="Bakalarski C.E."/>
            <person name="Elledge S.J."/>
            <person name="Gygi S.P."/>
        </authorList>
    </citation>
    <scope>PHOSPHORYLATION [LARGE SCALE ANALYSIS] AT SER-26; SER-30; SER-160; SER-189 AND THR-382</scope>
    <scope>IDENTIFICATION BY MASS SPECTROMETRY [LARGE SCALE ANALYSIS]</scope>
    <source>
        <tissue>Cervix carcinoma</tissue>
    </source>
</reference>
<reference key="15">
    <citation type="journal article" date="2009" name="Anal. Chem.">
        <title>Lys-N and trypsin cover complementary parts of the phosphoproteome in a refined SCX-based approach.</title>
        <authorList>
            <person name="Gauci S."/>
            <person name="Helbig A.O."/>
            <person name="Slijper M."/>
            <person name="Krijgsveld J."/>
            <person name="Heck A.J."/>
            <person name="Mohammed S."/>
        </authorList>
    </citation>
    <scope>IDENTIFICATION BY MASS SPECTROMETRY [LARGE SCALE ANALYSIS]</scope>
</reference>
<reference key="16">
    <citation type="journal article" date="2009" name="Mol. Cell. Proteomics">
        <title>Large-scale proteomics analysis of the human kinome.</title>
        <authorList>
            <person name="Oppermann F.S."/>
            <person name="Gnad F."/>
            <person name="Olsen J.V."/>
            <person name="Hornberger R."/>
            <person name="Greff Z."/>
            <person name="Keri G."/>
            <person name="Mann M."/>
            <person name="Daub H."/>
        </authorList>
    </citation>
    <scope>IDENTIFICATION BY MASS SPECTROMETRY [LARGE SCALE ANALYSIS]</scope>
</reference>
<reference key="17">
    <citation type="journal article" date="2009" name="Neurology">
        <title>Variation in GIGYF2 is not associated with Parkinson disease.</title>
        <authorList>
            <consortium name="Parkinson Study Group-PROGENI Investigators"/>
            <person name="Nichols W.C."/>
            <person name="Kissell D.K."/>
            <person name="Pankratz N."/>
            <person name="Pauciulo M.W."/>
            <person name="Elsaesser V.E."/>
            <person name="Clark K.A."/>
            <person name="Halter C.A."/>
            <person name="Rudolph A."/>
            <person name="Wojcieszek J."/>
            <person name="Pfeiffer R.F."/>
            <person name="Foroud T."/>
        </authorList>
    </citation>
    <scope>LACK OF INVOLVEMENT IN PARK11</scope>
</reference>
<reference key="18">
    <citation type="journal article" date="2009" name="Parkinsonism Relat. Disord.">
        <title>GIGYF2 mutations are not a frequent cause of familial Parkinson's disease.</title>
        <authorList>
            <consortium name="Italian Parkinson Genetics Network"/>
            <person name="Di Fonzo A."/>
            <person name="Fabrizio E."/>
            <person name="Thomas A."/>
            <person name="Fincati E."/>
            <person name="Marconi R."/>
            <person name="Tinazzi M."/>
            <person name="Breedveld G.J."/>
            <person name="Simons E.J."/>
            <person name="Chien H.F."/>
            <person name="Ferreira J.J."/>
            <person name="Horstink M.W."/>
            <person name="Abbruzzese G."/>
            <person name="Borroni B."/>
            <person name="Cossu G."/>
            <person name="Dalla Libera A."/>
            <person name="Fabbrini G."/>
            <person name="Guidi M."/>
            <person name="De Mari M."/>
            <person name="Lopiano L."/>
            <person name="Martignoni E."/>
            <person name="Marini P."/>
            <person name="Onofrj M."/>
            <person name="Padovani A."/>
            <person name="Stocchi F."/>
            <person name="Toni V."/>
            <person name="Sampaio C."/>
            <person name="Barbosa E.R."/>
            <person name="Meco G."/>
            <person name="Oostra B.A."/>
            <person name="Bonifati V."/>
        </authorList>
    </citation>
    <scope>LACK OF INVOLVEMENT IN PARK11</scope>
</reference>
<reference key="19">
    <citation type="journal article" date="2009" name="Sci. Signal.">
        <title>Quantitative phosphoproteomic analysis of T cell receptor signaling reveals system-wide modulation of protein-protein interactions.</title>
        <authorList>
            <person name="Mayya V."/>
            <person name="Lundgren D.H."/>
            <person name="Hwang S.-I."/>
            <person name="Rezaul K."/>
            <person name="Wu L."/>
            <person name="Eng J.K."/>
            <person name="Rodionov V."/>
            <person name="Han D.K."/>
        </authorList>
    </citation>
    <scope>PHOSPHORYLATION [LARGE SCALE ANALYSIS] AT SER-26; SER-30; SER-139 AND THR-382</scope>
    <scope>IDENTIFICATION BY MASS SPECTROMETRY [LARGE SCALE ANALYSIS]</scope>
    <source>
        <tissue>Leukemic T-cell</tissue>
    </source>
</reference>
<reference key="20">
    <citation type="journal article" date="2010" name="Neurobiol. Aging">
        <title>Follow-up study of the GIGYF2 gene in French families with Parkinson's disease.</title>
        <authorList>
            <consortium name="French Parkinson's Disease Genetics Study Group (FPDGSG)"/>
            <person name="Lesage S."/>
            <person name="Condroyer C."/>
            <person name="Lohman E."/>
            <person name="Troiano A."/>
            <person name="Tison F."/>
            <person name="Viallet F."/>
            <person name="Damier P."/>
            <person name="Tranchant C."/>
            <person name="Vidhaillet M."/>
            <person name="Ouvrard-Hernandez A.M."/>
            <person name="Duerr A."/>
            <person name="Brice A."/>
        </authorList>
    </citation>
    <scope>LACK OF INVOLVEMENT IN PARK11</scope>
</reference>
<reference key="21">
    <citation type="journal article" date="2010" name="Sci. Signal.">
        <title>Quantitative phosphoproteomics reveals widespread full phosphorylation site occupancy during mitosis.</title>
        <authorList>
            <person name="Olsen J.V."/>
            <person name="Vermeulen M."/>
            <person name="Santamaria A."/>
            <person name="Kumar C."/>
            <person name="Miller M.L."/>
            <person name="Jensen L.J."/>
            <person name="Gnad F."/>
            <person name="Cox J."/>
            <person name="Jensen T.S."/>
            <person name="Nigg E.A."/>
            <person name="Brunak S."/>
            <person name="Mann M."/>
        </authorList>
    </citation>
    <scope>PHOSPHORYLATION [LARGE SCALE ANALYSIS] AT SER-26; SER-236; THR-382 AND SER-593</scope>
    <scope>IDENTIFICATION BY MASS SPECTROMETRY [LARGE SCALE ANALYSIS]</scope>
    <source>
        <tissue>Cervix carcinoma</tissue>
    </source>
</reference>
<reference key="22">
    <citation type="journal article" date="2011" name="BMC Syst. Biol.">
        <title>Initial characterization of the human central proteome.</title>
        <authorList>
            <person name="Burkard T.R."/>
            <person name="Planyavsky M."/>
            <person name="Kaupe I."/>
            <person name="Breitwieser F.P."/>
            <person name="Buerckstuemmer T."/>
            <person name="Bennett K.L."/>
            <person name="Superti-Furga G."/>
            <person name="Colinge J."/>
        </authorList>
    </citation>
    <scope>IDENTIFICATION BY MASS SPECTROMETRY [LARGE SCALE ANALYSIS]</scope>
</reference>
<reference key="23">
    <citation type="journal article" date="2011" name="Neurobiol. Aging">
        <title>GIGYF2 has no major role in Parkinson genetic etiology in a Belgian population.</title>
        <authorList>
            <person name="Meeus B."/>
            <person name="Nuytemans K."/>
            <person name="Crosiers D."/>
            <person name="Engelborghs S."/>
            <person name="Pals P."/>
            <person name="Pickut B."/>
            <person name="Peeters K."/>
            <person name="Mattheijssens M."/>
            <person name="Corsmit E."/>
            <person name="Cras P."/>
            <person name="De Deyn P.P."/>
            <person name="Theuns J."/>
            <person name="Van Broeckhoven C."/>
        </authorList>
    </citation>
    <scope>LACK OF INVOLVEMENT IN PARK11</scope>
</reference>
<reference key="24">
    <citation type="journal article" date="2011" name="Sci. Signal.">
        <title>System-wide temporal characterization of the proteome and phosphoproteome of human embryonic stem cell differentiation.</title>
        <authorList>
            <person name="Rigbolt K.T."/>
            <person name="Prokhorova T.A."/>
            <person name="Akimov V."/>
            <person name="Henningsen J."/>
            <person name="Johansen P.T."/>
            <person name="Kratchmarova I."/>
            <person name="Kassem M."/>
            <person name="Mann M."/>
            <person name="Olsen J.V."/>
            <person name="Blagoev B."/>
        </authorList>
    </citation>
    <scope>PHOSPHORYLATION [LARGE SCALE ANALYSIS] AT SER-26; SER-30; SER-139 AND SER-236</scope>
    <scope>IDENTIFICATION BY MASS SPECTROMETRY [LARGE SCALE ANALYSIS]</scope>
</reference>
<reference key="25">
    <citation type="journal article" date="2012" name="Mol. Cell. Biol.">
        <title>A novel 4EHP-GIGYF2 translational repressor complex is essential for mammalian development.</title>
        <authorList>
            <person name="Morita M."/>
            <person name="Ler L.W."/>
            <person name="Fabian M.R."/>
            <person name="Siddiqui N."/>
            <person name="Mullin M."/>
            <person name="Henderson V.C."/>
            <person name="Alain T."/>
            <person name="Fonseca B.D."/>
            <person name="Karashchuk G."/>
            <person name="Bennett C.F."/>
            <person name="Kabuta T."/>
            <person name="Higashi S."/>
            <person name="Larsson O."/>
            <person name="Topisirovic I."/>
            <person name="Smith R.J."/>
            <person name="Gingras A.C."/>
            <person name="Sonenberg N."/>
        </authorList>
    </citation>
    <scope>FUNCTION</scope>
    <scope>IDENTIFICATION IN THE 4EHP-GYF2 COMPLEX</scope>
    <scope>MUTAGENESIS OF 41-TYR--LEU-49</scope>
</reference>
<reference key="26">
    <citation type="journal article" date="2012" name="Mol. Cell. Proteomics">
        <title>Comparative large-scale characterisation of plant vs. mammal proteins reveals similar and idiosyncratic N-alpha acetylation features.</title>
        <authorList>
            <person name="Bienvenut W.V."/>
            <person name="Sumpton D."/>
            <person name="Martinez A."/>
            <person name="Lilla S."/>
            <person name="Espagne C."/>
            <person name="Meinnel T."/>
            <person name="Giglione C."/>
        </authorList>
    </citation>
    <scope>ACETYLATION [LARGE SCALE ANALYSIS] AT ALA-2</scope>
    <scope>CLEAVAGE OF INITIATOR METHIONINE [LARGE SCALE ANALYSIS]</scope>
    <scope>IDENTIFICATION BY MASS SPECTROMETRY [LARGE SCALE ANALYSIS]</scope>
</reference>
<reference key="27">
    <citation type="journal article" date="2013" name="J. Proteome Res.">
        <title>Toward a comprehensive characterization of a human cancer cell phosphoproteome.</title>
        <authorList>
            <person name="Zhou H."/>
            <person name="Di Palma S."/>
            <person name="Preisinger C."/>
            <person name="Peng M."/>
            <person name="Polat A.N."/>
            <person name="Heck A.J."/>
            <person name="Mohammed S."/>
        </authorList>
    </citation>
    <scope>PHOSPHORYLATION [LARGE SCALE ANALYSIS] AT SER-19; SER-26; SER-30; SER-139; SER-160; SER-189; THR-382; SER-993 AND SER-1284</scope>
    <scope>IDENTIFICATION BY MASS SPECTROMETRY [LARGE SCALE ANALYSIS]</scope>
    <source>
        <tissue>Cervix carcinoma</tissue>
        <tissue>Erythroleukemia</tissue>
    </source>
</reference>
<reference key="28">
    <citation type="journal article" date="2014" name="J. Proteomics">
        <title>An enzyme assisted RP-RPLC approach for in-depth analysis of human liver phosphoproteome.</title>
        <authorList>
            <person name="Bian Y."/>
            <person name="Song C."/>
            <person name="Cheng K."/>
            <person name="Dong M."/>
            <person name="Wang F."/>
            <person name="Huang J."/>
            <person name="Sun D."/>
            <person name="Wang L."/>
            <person name="Ye M."/>
            <person name="Zou H."/>
        </authorList>
    </citation>
    <scope>PHOSPHORYLATION [LARGE SCALE ANALYSIS] AT SER-26; SER-236 AND SER-388</scope>
    <scope>IDENTIFICATION BY MASS SPECTROMETRY [LARGE SCALE ANALYSIS]</scope>
    <source>
        <tissue>Liver</tissue>
    </source>
</reference>
<reference key="29">
    <citation type="journal article" date="2015" name="Proteomics">
        <title>N-terminome analysis of the human mitochondrial proteome.</title>
        <authorList>
            <person name="Vaca Jacome A.S."/>
            <person name="Rabilloud T."/>
            <person name="Schaeffer-Reiss C."/>
            <person name="Rompais M."/>
            <person name="Ayoub D."/>
            <person name="Lane L."/>
            <person name="Bairoch A."/>
            <person name="Van Dorsselaer A."/>
            <person name="Carapito C."/>
        </authorList>
    </citation>
    <scope>IDENTIFICATION BY MASS SPECTROMETRY [LARGE SCALE ANALYSIS]</scope>
</reference>
<reference key="30">
    <citation type="journal article" date="2017" name="Nat. Struct. Mol. Biol.">
        <title>Site-specific mapping of the human SUMO proteome reveals co-modification with phosphorylation.</title>
        <authorList>
            <person name="Hendriks I.A."/>
            <person name="Lyon D."/>
            <person name="Young C."/>
            <person name="Jensen L.J."/>
            <person name="Vertegaal A.C."/>
            <person name="Nielsen M.L."/>
        </authorList>
    </citation>
    <scope>SUMOYLATION [LARGE SCALE ANALYSIS] AT LYS-1123</scope>
    <scope>IDENTIFICATION BY MASS SPECTROMETRY [LARGE SCALE ANALYSIS]</scope>
</reference>
<reference key="31">
    <citation type="journal article" date="2019" name="Genes Dev.">
        <title>Molecular basis for GIGYF-Me31B complex assembly in 4EHP-mediated translational repression.</title>
        <authorList>
            <person name="Peter D."/>
            <person name="Ruscica V."/>
            <person name="Bawankar P."/>
            <person name="Weber R."/>
            <person name="Helms S."/>
            <person name="Valkov E."/>
            <person name="Igreja C."/>
            <person name="Izaurralde E."/>
        </authorList>
    </citation>
    <scope>FUNCTION</scope>
    <scope>INTERACTION WITH DDX6; EIF4E2 AND TTP</scope>
    <scope>MUTAGENESIS OF TRP-288; PHE-300 AND PHE-306</scope>
</reference>
<reference key="32">
    <citation type="journal article" date="2020" name="Mol. Cell">
        <title>GIGYF2 and 4EHP Inhibit Translation Initiation of Defective Messenger RNAs to Assist Ribosome-Associated Quality Control.</title>
        <authorList>
            <person name="Hickey K.L."/>
            <person name="Dickson K."/>
            <person name="Cogan J.Z."/>
            <person name="Replogle J.M."/>
            <person name="Schoof M."/>
            <person name="D'Orazio K.N."/>
            <person name="Sinha N.K."/>
            <person name="Hussmann J.A."/>
            <person name="Jost M."/>
            <person name="Frost A."/>
            <person name="Green R."/>
            <person name="Weissman J.S."/>
            <person name="Kostova K.K."/>
        </authorList>
    </citation>
    <scope>FUNCTION</scope>
    <scope>IDENTIFICATION IN THE 4EHP-GYF2 COMPLEX</scope>
</reference>
<reference key="33">
    <citation type="journal article" date="2022" name="Proc. Natl. Acad. Sci. U.S.A.">
        <title>SARS-CoV-2 impairs interferon production via NSP2-induced repression of mRNA translation.</title>
        <authorList>
            <person name="Xu Z."/>
            <person name="Choi J.H."/>
            <person name="Dai D.L."/>
            <person name="Luo J."/>
            <person name="Ladak R.J."/>
            <person name="Li Q."/>
            <person name="Wang Y."/>
            <person name="Zhang C."/>
            <person name="Wiebe S."/>
            <person name="Liu A.C.H."/>
            <person name="Ran X."/>
            <person name="Yang J."/>
            <person name="Naeli P."/>
            <person name="Garzia A."/>
            <person name="Zhou L."/>
            <person name="Mahmood N."/>
            <person name="Deng Q."/>
            <person name="Elaish M."/>
            <person name="Lin R."/>
            <person name="Mahal L.K."/>
            <person name="Hobman T.C."/>
            <person name="Pelletier J."/>
            <person name="Alain T."/>
            <person name="Vidal S.M."/>
            <person name="Duchaine T."/>
            <person name="Mazhab-Jafari M.T."/>
            <person name="Mao X."/>
            <person name="Jafarnejad S.M."/>
            <person name="Sonenberg N."/>
        </authorList>
    </citation>
    <scope>FUNCTION</scope>
    <scope>FUNCTION (MICROBIAL INFECTION)</scope>
    <scope>INTERACTION WITH SARS-COV NON-STRUCTURAL PROTEIN 2 PROTEIN (MICROBIAL INFECTION)</scope>
</reference>
<reference key="34">
    <citation type="journal article" date="2008" name="Am. J. Hum. Genet.">
        <title>Mutations in the GIGYF2 (TNRC15) gene at the PARK11 locus in familial Parkinson disease.</title>
        <authorList>
            <person name="Lautier C."/>
            <person name="Goldwurm S."/>
            <person name="Duerr A."/>
            <person name="Giovannone B."/>
            <person name="Tsiaras W.G."/>
            <person name="Pezzoli G."/>
            <person name="Brice A."/>
            <person name="Smith R.J."/>
        </authorList>
    </citation>
    <scope>VARIANTS PARK11 ALA-112; VAL-278; THR-335; THR-457; GLU-606 AND ILE-1242</scope>
    <scope>VARIANTS SER-56; THR-460; ARG-1171; GLN-1211 DEL AND GLN-1212 INS</scope>
</reference>
<reference key="35">
    <citation type="journal article" date="2009" name="Neurosci. Lett.">
        <title>GIGYF2 Asn56Ser and Asn457Thr mutations in Parkinson disease patients.</title>
        <authorList>
            <person name="Guo Y."/>
            <person name="Jankovic J."/>
            <person name="Zhu S."/>
            <person name="Le W."/>
            <person name="Song Z."/>
            <person name="Xie W."/>
            <person name="Liao D."/>
            <person name="Yang H."/>
            <person name="Deng H."/>
        </authorList>
    </citation>
    <scope>VARIANT THR-460</scope>
</reference>
<reference key="36">
    <citation type="journal article" date="2009" name="Neurosci. Lett.">
        <title>GIGYF2 Asn56Ser mutation is rare in Chinese Parkinson's disease patients.</title>
        <authorList>
            <person name="Zhang Y."/>
            <person name="Zheng L."/>
            <person name="Zhang T."/>
            <person name="Wang Y."/>
            <person name="Xiao Q."/>
            <person name="Fei Q.Z."/>
            <person name="Cui P.J."/>
            <person name="Cao L."/>
            <person name="Chen S.D."/>
        </authorList>
    </citation>
    <scope>VARIANT SER-56</scope>
</reference>
<reference key="37">
    <citation type="journal article" date="2010" name="Neurosci. Lett.">
        <title>Novel GIGYF2 gene variants in patients with Parkinson's disease in Chinese population.</title>
        <authorList>
            <person name="Wang L."/>
            <person name="Guo J.F."/>
            <person name="Zhang W.W."/>
            <person name="Xu Q."/>
            <person name="Zuo X."/>
            <person name="Shi C.H."/>
            <person name="Luo L.Z."/>
            <person name="Liu J."/>
            <person name="Hu L."/>
            <person name="Hu Y.C."/>
            <person name="She L."/>
            <person name="Jiang H."/>
            <person name="Yan X.X."/>
            <person name="Xia K."/>
            <person name="Pan Q."/>
            <person name="Tang B.S."/>
        </authorList>
    </citation>
    <scope>VARIANTS PARK11 LYS-256; VAL-345; TYR-377; SER-473; LYS-492; TYR-519; PHE-580; GLN-979 DEL AND HIS-1070</scope>
</reference>
<reference key="38">
    <citation type="journal article" date="2011" name="Neurobiol. Aging">
        <title>Mutational screening and zebrafish functional analysis of GIGYF2 as a Parkinson-disease gene.</title>
        <authorList>
            <person name="Guella I."/>
            <person name="Pistocchi A."/>
            <person name="Asselta R."/>
            <person name="Rimoldi V."/>
            <person name="Ghilardi A."/>
            <person name="Sironi F."/>
            <person name="Trotta L."/>
            <person name="Primignani P."/>
            <person name="Zini M."/>
            <person name="Zecchinelli A."/>
            <person name="Coviello D."/>
            <person name="Pezzoli G."/>
            <person name="Del Giacco L."/>
            <person name="Duga S."/>
            <person name="Goldwurm S."/>
        </authorList>
    </citation>
    <scope>VARIANTS SER-56; VAL-560; VAL-1131 AND ARG-1171</scope>
    <scope>VARIANTS PARK11 CYS-273; GLU-349; THR-457 AND PRO-1209</scope>
</reference>
<reference key="39">
    <citation type="journal article" date="2015" name="J. Hum. Genet.">
        <title>GIGYF2 mutation in late-onset Parkinson's disease with cognitive impairment.</title>
        <authorList>
            <person name="Ruiz-Martinez J."/>
            <person name="Krebs C.E."/>
            <person name="Makarov V."/>
            <person name="Gorostidi A."/>
            <person name="Marti-Masso J.F."/>
            <person name="Paisan-Ruiz C."/>
        </authorList>
    </citation>
    <scope>VARIANT PARK11 GLY-589</scope>
</reference>
<comment type="function">
    <text evidence="5 17 19 20 21">Key component of the 4EHP-GYF2 complex, a multiprotein complex that acts as a repressor of translation initiation (PubMed:22751931, PubMed:31439631, PubMed:35878012). In the 4EHP-GYF2 complex, acts as a factor that bridges EIF4E2 to ZFP36/TTP, linking translation repression with mRNA decay (PubMed:31439631). Also recruits and bridges the association of the 4EHP complex with the decapping effector protein DDX6, which is required for the ZFP36/TTP-mediated down-regulation of AU-rich mRNA (PubMed:31439631). May act cooperatively with GRB10 to regulate tyrosine kinase receptor signaling, including IGF1 and insulin receptors (PubMed:12771153). In association with EIF4E2, assists ribosome-associated quality control (RQC) by sequestering the mRNA cap, blocking ribosome initiation and decreasing the translational load on problematic messages. Part of a pathway that works in parallel to RQC-mediated degradation of the stalled nascent polypeptide (PubMed:32726578). GIGYF2 and EIF4E2 work downstream and independently of ZNF598, which seems to work as a scaffold that can recruit them to faulty mRNA even if alternative recruitment mechanisms may exist (PubMed:32726578).</text>
</comment>
<comment type="function">
    <text evidence="21">(Microbial infection) Upon SARS coronavirus-2/SARS-CoV-2 infection, the interaction with non-structural protein 2 (nsp2) enhances GIGYF2 binding to EIF4E2 and increases repression of translation initiation of genes involved in antiviral innate immune response such as IFNB1.</text>
</comment>
<comment type="subunit">
    <text evidence="2 17 19 20">Component of the 4EHP-GYF2 complex, at least composed of EIF4E2, GIGYF2 and ZNF598 (PubMed:22751931, PubMed:31439631, PubMed:32726578). Interacts (via the 4EHP-binding motif) with EIF4E2; the interaction is direct (PubMed:22751931, PubMed:31439631, PubMed:32726578). Interacts with ZFP36/TTP (via P-P-P-P-G repeats); the interaction is direct (PubMed:31439631). Interacts with GRB10 (By similarity). Interacts (via DDX6 motif) with DDX6 (via RecA-like domain 2) (PubMed:31439631).</text>
</comment>
<comment type="subunit">
    <text evidence="21">(Microbial infection) Interacts with SARS coronavirus-2/SARS-CoV-2 non-structural protein 2 (nsp2); the interaction enhances GIGYF2 binding to EIF4E2.</text>
</comment>
<comment type="interaction">
    <interactant intactId="EBI-765394">
        <id>Q6Y7W6</id>
    </interactant>
    <interactant intactId="EBI-32715389">
        <id>O60573-1</id>
        <label>EIF4E2</label>
    </interactant>
    <organismsDiffer>false</organismsDiffer>
    <experiments>6</experiments>
</comment>
<comment type="interaction">
    <interactant intactId="EBI-765394">
        <id>Q6Y7W6</id>
    </interactant>
    <interactant intactId="EBI-347088">
        <id>P63104</id>
        <label>YWHAZ</label>
    </interactant>
    <organismsDiffer>false</organismsDiffer>
    <experiments>2</experiments>
</comment>
<comment type="interaction">
    <interactant intactId="EBI-25762361">
        <id>Q6Y7W6-1</id>
    </interactant>
    <interactant intactId="EBI-32715389">
        <id>O60573-1</id>
        <label>EIF4E2</label>
    </interactant>
    <organismsDiffer>false</organismsDiffer>
    <experiments>11</experiments>
</comment>
<comment type="alternative products">
    <event type="alternative splicing"/>
    <isoform>
        <id>Q6Y7W6-1</id>
        <name>1</name>
        <sequence type="displayed"/>
    </isoform>
    <isoform>
        <id>Q6Y7W6-3</id>
        <name>2</name>
        <sequence type="described" ref="VSP_022244 VSP_043471"/>
    </isoform>
    <isoform>
        <id>Q6Y7W6-4</id>
        <name>3</name>
        <sequence type="described" ref="VSP_044996 VSP_044997"/>
    </isoform>
    <isoform>
        <id>Q6Y7W6-5</id>
        <name>4</name>
        <sequence type="described" ref="VSP_044996"/>
    </isoform>
</comment>
<comment type="disease" evidence="8 15 16 18">
    <disease id="DI-02137">
        <name>Parkinson disease 11</name>
        <acronym>PARK11</acronym>
        <description>A complex neurodegenerative disorder characterized by bradykinesia, resting tremor, muscular rigidity and postural instability, as well as by a clinically significant response to treatment with levodopa. The pathology involves the loss of dopaminergic neurons in the substantia nigra and the presence of Lewy bodies (intraneuronal accumulations of aggregated proteins), in surviving neurons in various areas of the brain.</description>
        <dbReference type="MIM" id="607688"/>
    </disease>
    <text evidence="9 10 11 12 13 14 15">Disease susceptibility may be associated with variants affecting the gene represented in this entry. Its association with Parkinson disease is however unclear. According to a number of studies, variations affecting this gene are not a frequent cause of Parkinson disease, suggesting that GIGYF2 does not play a major role in Parkinson disease etiology (PubMed:19279319, PubMed:19321232, PubMed:19429085, PubMed:19482505, PubMed:19638301, PubMed:20004041, PubMed:20060621).</text>
</comment>
<comment type="similarity">
    <text evidence="28">Belongs to the GIGYF family.</text>
</comment>
<comment type="sequence caution" evidence="28">
    <conflict type="erroneous initiation">
        <sequence resource="EMBL-CDS" id="BAA31617"/>
    </conflict>
    <text>Extended N-terminus.</text>
</comment>
<comment type="sequence caution" evidence="28">
    <conflict type="miscellaneous discrepancy">
        <sequence resource="EMBL-CDS" id="BAA91873"/>
    </conflict>
    <text>Unlikely isoform.</text>
</comment>
<organism>
    <name type="scientific">Homo sapiens</name>
    <name type="common">Human</name>
    <dbReference type="NCBI Taxonomy" id="9606"/>
    <lineage>
        <taxon>Eukaryota</taxon>
        <taxon>Metazoa</taxon>
        <taxon>Chordata</taxon>
        <taxon>Craniata</taxon>
        <taxon>Vertebrata</taxon>
        <taxon>Euteleostomi</taxon>
        <taxon>Mammalia</taxon>
        <taxon>Eutheria</taxon>
        <taxon>Euarchontoglires</taxon>
        <taxon>Primates</taxon>
        <taxon>Haplorrhini</taxon>
        <taxon>Catarrhini</taxon>
        <taxon>Hominidae</taxon>
        <taxon>Homo</taxon>
    </lineage>
</organism>
<feature type="initiator methionine" description="Removed" evidence="37">
    <location>
        <position position="1"/>
    </location>
</feature>
<feature type="chain" id="PRO_0000270837" description="GRB10-interacting GYF protein 2">
    <location>
        <begin position="2"/>
        <end position="1299"/>
    </location>
</feature>
<feature type="domain" description="GYF" evidence="3">
    <location>
        <begin position="533"/>
        <end position="581"/>
    </location>
</feature>
<feature type="region of interest" description="Disordered" evidence="4">
    <location>
        <begin position="112"/>
        <end position="131"/>
    </location>
</feature>
<feature type="region of interest" description="Disordered" evidence="4">
    <location>
        <begin position="147"/>
        <end position="195"/>
    </location>
</feature>
<feature type="region of interest" description="Disordered" evidence="4">
    <location>
        <begin position="214"/>
        <end position="247"/>
    </location>
</feature>
<feature type="region of interest" description="Disordered" evidence="4">
    <location>
        <begin position="266"/>
        <end position="433"/>
    </location>
</feature>
<feature type="region of interest" description="Required for GRB10-binding" evidence="1">
    <location>
        <begin position="547"/>
        <end position="563"/>
    </location>
</feature>
<feature type="region of interest" description="Disordered" evidence="4">
    <location>
        <begin position="733"/>
        <end position="793"/>
    </location>
</feature>
<feature type="region of interest" description="Disordered" evidence="4">
    <location>
        <begin position="845"/>
        <end position="866"/>
    </location>
</feature>
<feature type="region of interest" description="Required for interaction with SARS-CoV-2 non-structural protein 2 (nsp2)" evidence="21">
    <location>
        <begin position="860"/>
        <end position="919"/>
    </location>
</feature>
<feature type="region of interest" description="Disordered" evidence="4">
    <location>
        <begin position="872"/>
        <end position="891"/>
    </location>
</feature>
<feature type="region of interest" description="Disordered" evidence="4">
    <location>
        <begin position="917"/>
        <end position="936"/>
    </location>
</feature>
<feature type="region of interest" description="Disordered" evidence="4">
    <location>
        <begin position="957"/>
        <end position="997"/>
    </location>
</feature>
<feature type="region of interest" description="Disordered" evidence="4">
    <location>
        <begin position="1009"/>
        <end position="1048"/>
    </location>
</feature>
<feature type="region of interest" description="Disordered" evidence="4">
    <location>
        <begin position="1084"/>
        <end position="1112"/>
    </location>
</feature>
<feature type="region of interest" description="Disordered" evidence="4">
    <location>
        <begin position="1195"/>
        <end position="1230"/>
    </location>
</feature>
<feature type="region of interest" description="Disordered" evidence="4">
    <location>
        <begin position="1247"/>
        <end position="1271"/>
    </location>
</feature>
<feature type="short sequence motif" description="4EHP-binding motif" evidence="17">
    <location>
        <begin position="40"/>
        <end position="50"/>
    </location>
</feature>
<feature type="short sequence motif" description="DDX6 binding motif" evidence="19">
    <location>
        <begin position="280"/>
        <end position="310"/>
    </location>
</feature>
<feature type="compositionally biased region" description="Basic and acidic residues" evidence="4">
    <location>
        <begin position="151"/>
        <end position="182"/>
    </location>
</feature>
<feature type="compositionally biased region" description="Basic and acidic residues" evidence="4">
    <location>
        <begin position="225"/>
        <end position="247"/>
    </location>
</feature>
<feature type="compositionally biased region" description="Acidic residues" evidence="4">
    <location>
        <begin position="289"/>
        <end position="298"/>
    </location>
</feature>
<feature type="compositionally biased region" description="Basic and acidic residues" evidence="4">
    <location>
        <begin position="312"/>
        <end position="329"/>
    </location>
</feature>
<feature type="compositionally biased region" description="Basic and acidic residues" evidence="4">
    <location>
        <begin position="338"/>
        <end position="363"/>
    </location>
</feature>
<feature type="compositionally biased region" description="Polar residues" evidence="4">
    <location>
        <begin position="369"/>
        <end position="392"/>
    </location>
</feature>
<feature type="compositionally biased region" description="Basic and acidic residues" evidence="4">
    <location>
        <begin position="393"/>
        <end position="414"/>
    </location>
</feature>
<feature type="compositionally biased region" description="Polar residues" evidence="4">
    <location>
        <begin position="924"/>
        <end position="936"/>
    </location>
</feature>
<feature type="compositionally biased region" description="Basic and acidic residues" evidence="4">
    <location>
        <begin position="957"/>
        <end position="972"/>
    </location>
</feature>
<feature type="compositionally biased region" description="Low complexity" evidence="4">
    <location>
        <begin position="1013"/>
        <end position="1025"/>
    </location>
</feature>
<feature type="compositionally biased region" description="Polar residues" evidence="4">
    <location>
        <begin position="1026"/>
        <end position="1048"/>
    </location>
</feature>
<feature type="compositionally biased region" description="Low complexity" evidence="4">
    <location>
        <begin position="1090"/>
        <end position="1104"/>
    </location>
</feature>
<feature type="compositionally biased region" description="Low complexity" evidence="4">
    <location>
        <begin position="1202"/>
        <end position="1217"/>
    </location>
</feature>
<feature type="modified residue" description="N-acetylalanine" evidence="37">
    <location>
        <position position="2"/>
    </location>
</feature>
<feature type="modified residue" description="Phosphoserine" evidence="38">
    <location>
        <position position="19"/>
    </location>
</feature>
<feature type="modified residue" description="Phosphoserine" evidence="30 33 34 35 36 38 39">
    <location>
        <position position="26"/>
    </location>
</feature>
<feature type="modified residue" description="Phosphoserine" evidence="32 33 34 36 38">
    <location>
        <position position="30"/>
    </location>
</feature>
<feature type="modified residue" description="Omega-N-methylarginine" evidence="2">
    <location>
        <position position="107"/>
    </location>
</feature>
<feature type="modified residue" description="Omega-N-methylarginine" evidence="2">
    <location>
        <position position="118"/>
    </location>
</feature>
<feature type="modified residue" description="Omega-N-methylarginine" evidence="2">
    <location>
        <position position="120"/>
    </location>
</feature>
<feature type="modified residue" description="Phosphoserine" evidence="34 36 38">
    <location>
        <position position="139"/>
    </location>
</feature>
<feature type="modified residue" description="Omega-N-methylarginine" evidence="2">
    <location>
        <position position="149"/>
    </location>
</feature>
<feature type="modified residue" description="Phosphoserine" evidence="33 38">
    <location>
        <position position="160"/>
    </location>
</feature>
<feature type="modified residue" description="Phosphoserine" evidence="33 38">
    <location>
        <position position="189"/>
    </location>
</feature>
<feature type="modified residue" description="Phosphoserine" evidence="31 35 36 39">
    <location>
        <position position="236"/>
    </location>
</feature>
<feature type="modified residue" description="Phosphothreonine" evidence="33 34 35 38">
    <location>
        <position position="382"/>
    </location>
</feature>
<feature type="modified residue" description="Phosphoserine" evidence="39">
    <location>
        <position position="388"/>
    </location>
</feature>
<feature type="modified residue" description="Phosphoserine" evidence="35">
    <location>
        <position position="593"/>
    </location>
</feature>
<feature type="modified residue" description="Phosphoserine" evidence="38">
    <location>
        <position position="993"/>
    </location>
</feature>
<feature type="modified residue" description="Phosphoserine" evidence="38">
    <location>
        <position position="1284"/>
    </location>
</feature>
<feature type="cross-link" description="Glycyl lysine isopeptide (Lys-Gly) (interchain with G-Cter in SUMO2)" evidence="40">
    <location>
        <position position="1123"/>
    </location>
</feature>
<feature type="splice variant" id="VSP_022244" description="In isoform 2." evidence="24 26">
    <original>V</original>
    <variation>VGKKNGYYCMYSPVLLLGQPLCQ</variation>
    <location>
        <position position="177"/>
    </location>
</feature>
<feature type="splice variant" id="VSP_044996" description="In isoform 3 and isoform 4." evidence="27">
    <location>
        <begin position="238"/>
        <end position="243"/>
    </location>
</feature>
<feature type="splice variant" id="VSP_043471" description="In isoform 2." evidence="24 26">
    <location>
        <position position="365"/>
    </location>
</feature>
<feature type="splice variant" id="VSP_044997" description="In isoform 3." evidence="27">
    <location>
        <begin position="1205"/>
        <end position="1211"/>
    </location>
</feature>
<feature type="sequence variant" id="VAR_044439" description="Probable risk factor for PARK11; dbSNP:rs72554080." evidence="8 13 15">
    <original>N</original>
    <variation>S</variation>
    <location>
        <position position="56"/>
    </location>
</feature>
<feature type="sequence variant" id="VAR_044440" description="In PARK11; uncertain significance; dbSNP:rs1171688751." evidence="8">
    <original>T</original>
    <variation>A</variation>
    <location>
        <position position="112"/>
    </location>
</feature>
<feature type="sequence variant" id="VAR_077935" description="In PARK11; uncertain significance." evidence="16">
    <original>E</original>
    <variation>K</variation>
    <location>
        <position position="256"/>
    </location>
</feature>
<feature type="sequence variant" id="VAR_077936" description="In PARK11; uncertain significance; dbSNP:rs141225775." evidence="15">
    <original>S</original>
    <variation>C</variation>
    <location>
        <position position="273"/>
    </location>
</feature>
<feature type="sequence variant" id="VAR_044441" description="Probable risk factor for PARK11; dbSNP:rs118203904." evidence="8">
    <original>I</original>
    <variation>V</variation>
    <location>
        <position position="278"/>
    </location>
</feature>
<feature type="sequence variant" id="VAR_044442" description="In PARK11; uncertain significance; dbSNP:rs776898936." evidence="8">
    <original>S</original>
    <variation>T</variation>
    <location>
        <position position="335"/>
    </location>
</feature>
<feature type="sequence variant" id="VAR_077937" description="In PARK11; uncertain significance." evidence="16">
    <original>A</original>
    <variation>V</variation>
    <location>
        <position position="345"/>
    </location>
</feature>
<feature type="sequence variant" id="VAR_077938" description="In PARK11; uncertain significance; dbSNP:rs148277228." evidence="15">
    <original>D</original>
    <variation>E</variation>
    <location>
        <position position="349"/>
    </location>
</feature>
<feature type="sequence variant" id="VAR_077939" description="In PARK11; uncertain significance." evidence="16">
    <original>S</original>
    <variation>Y</variation>
    <location>
        <position position="377"/>
    </location>
</feature>
<feature type="sequence variant" id="VAR_051268" description="In dbSNP:rs34845648.">
    <original>P</original>
    <variation>L</variation>
    <location>
        <position position="423"/>
    </location>
</feature>
<feature type="sequence variant" id="VAR_044443" description="Probable risk factor for PARK11; dbSNP:rs116074753." evidence="8 15">
    <original>N</original>
    <variation>T</variation>
    <location>
        <position position="457"/>
    </location>
</feature>
<feature type="sequence variant" id="VAR_044444" description="In dbSNP:rs2289912." evidence="8 11">
    <original>P</original>
    <variation>T</variation>
    <location>
        <position position="460"/>
    </location>
</feature>
<feature type="sequence variant" id="VAR_077940" description="In PARK11; uncertain significance; dbSNP:rs1384919564." evidence="16">
    <original>P</original>
    <variation>S</variation>
    <location>
        <position position="473"/>
    </location>
</feature>
<feature type="sequence variant" id="VAR_077941" description="In PARK11; uncertain significance." evidence="16">
    <original>E</original>
    <variation>K</variation>
    <location>
        <position position="492"/>
    </location>
</feature>
<feature type="sequence variant" id="VAR_077942" description="In PARK11; uncertain significance." evidence="16">
    <original>H</original>
    <variation>Y</variation>
    <location>
        <position position="519"/>
    </location>
</feature>
<feature type="sequence variant" id="VAR_077943" description="In dbSNP:rs761136505." evidence="15">
    <original>A</original>
    <variation>V</variation>
    <location>
        <position position="560"/>
    </location>
</feature>
<feature type="sequence variant" id="VAR_077944" description="In PARK11; uncertain significance." evidence="16">
    <original>L</original>
    <variation>F</variation>
    <location>
        <position position="580"/>
    </location>
</feature>
<feature type="sequence variant" id="VAR_077945" description="Probable risk factor for PARK11." evidence="18">
    <original>R</original>
    <variation>G</variation>
    <location>
        <position position="589"/>
    </location>
</feature>
<feature type="sequence variant" id="VAR_044445" description="Probable risk factor for PARK11; dbSNP:rs118203903." evidence="8">
    <original>D</original>
    <variation>E</variation>
    <location>
        <position position="606"/>
    </location>
</feature>
<feature type="sequence variant" id="VAR_077946" description="In PARK11; uncertain significance." evidence="16">
    <location>
        <position position="979"/>
    </location>
</feature>
<feature type="sequence variant" id="VAR_077947" description="In PARK11; uncertain significance." evidence="16">
    <original>D</original>
    <variation>H</variation>
    <location>
        <position position="1070"/>
    </location>
</feature>
<feature type="sequence variant" id="VAR_077948" description="In dbSNP:rs773011114." evidence="15">
    <original>A</original>
    <variation>V</variation>
    <location>
        <position position="1131"/>
    </location>
</feature>
<feature type="sequence variant" id="VAR_044446" description="In dbSNP:rs72554081." evidence="8 15">
    <original>H</original>
    <variation>R</variation>
    <location>
        <position position="1171"/>
    </location>
</feature>
<feature type="sequence variant" id="VAR_077949" description="In PARK11; uncertain significance; dbSNP:rs114013774." evidence="15">
    <original>L</original>
    <variation>P</variation>
    <location>
        <position position="1209"/>
    </location>
</feature>
<feature type="sequence variant" id="VAR_044447" evidence="6 7 8 22">
    <location>
        <position position="1211"/>
    </location>
</feature>
<feature type="sequence variant" id="VAR_044448" evidence="8">
    <original>Q</original>
    <variation>QQ</variation>
    <location>
        <position position="1212"/>
    </location>
</feature>
<feature type="sequence variant" id="VAR_044449" description="In PARK11; dbSNP:rs769022021." evidence="8">
    <original>V</original>
    <variation>I</variation>
    <location>
        <position position="1242"/>
    </location>
</feature>
<feature type="mutagenesis site" description="Abolishes interaction with EIF4E2." evidence="17">
    <original>YRYGREEML</original>
    <variation>ARAGREEAA</variation>
    <location>
        <begin position="41"/>
        <end position="49"/>
    </location>
</feature>
<feature type="mutagenesis site" description="Abolishes interaction with DDX6." evidence="19">
    <original>W</original>
    <variation>A</variation>
    <location>
        <position position="288"/>
    </location>
</feature>
<feature type="mutagenesis site" description="Abolishes interaction with DDX6; when associated with A-306." evidence="19">
    <original>F</original>
    <variation>A</variation>
    <location>
        <position position="300"/>
    </location>
</feature>
<feature type="mutagenesis site" description="Abolishes interaction with DDX6; when associated with A-300." evidence="19">
    <original>F</original>
    <variation>A</variation>
    <location>
        <position position="306"/>
    </location>
</feature>
<feature type="sequence conflict" description="In Ref. 4; BX538172." evidence="28" ref="4">
    <original>M</original>
    <variation>T</variation>
    <location>
        <position position="565"/>
    </location>
</feature>
<feature type="sequence conflict" description="In Ref. 6; CAD98095." evidence="28" ref="6">
    <original>E</original>
    <variation>G</variation>
    <location>
        <position position="792"/>
    </location>
</feature>
<feature type="sequence conflict" description="In Ref. 6; CAD98095." evidence="28" ref="6">
    <original>D</original>
    <variation>G</variation>
    <location>
        <position position="1153"/>
    </location>
</feature>
<feature type="helix" evidence="42">
    <location>
        <begin position="45"/>
        <end position="50"/>
    </location>
</feature>
<feature type="helix" evidence="42">
    <location>
        <begin position="60"/>
        <end position="62"/>
    </location>
</feature>
<feature type="helix" evidence="42">
    <location>
        <begin position="65"/>
        <end position="70"/>
    </location>
</feature>
<feature type="helix" evidence="41">
    <location>
        <begin position="79"/>
        <end position="81"/>
    </location>
</feature>
<feature type="helix" evidence="41">
    <location>
        <begin position="86"/>
        <end position="94"/>
    </location>
</feature>
<feature type="helix" evidence="41">
    <location>
        <begin position="99"/>
        <end position="102"/>
    </location>
</feature>
<feature type="strand" evidence="43">
    <location>
        <begin position="536"/>
        <end position="539"/>
    </location>
</feature>
<feature type="strand" evidence="43">
    <location>
        <begin position="545"/>
        <end position="549"/>
    </location>
</feature>
<feature type="helix" evidence="43">
    <location>
        <begin position="551"/>
        <end position="560"/>
    </location>
</feature>
<feature type="strand" evidence="43">
    <location>
        <begin position="568"/>
        <end position="571"/>
    </location>
</feature>
<feature type="strand" evidence="43">
    <location>
        <begin position="574"/>
        <end position="576"/>
    </location>
</feature>
<feature type="helix" evidence="43">
    <location>
        <begin position="580"/>
        <end position="587"/>
    </location>
</feature>
<keyword id="KW-0002">3D-structure</keyword>
<keyword id="KW-0007">Acetylation</keyword>
<keyword id="KW-0025">Alternative splicing</keyword>
<keyword id="KW-0225">Disease variant</keyword>
<keyword id="KW-1017">Isopeptide bond</keyword>
<keyword id="KW-0488">Methylation</keyword>
<keyword id="KW-0523">Neurodegeneration</keyword>
<keyword id="KW-0907">Parkinson disease</keyword>
<keyword id="KW-0908">Parkinsonism</keyword>
<keyword id="KW-0597">Phosphoprotein</keyword>
<keyword id="KW-1267">Proteomics identification</keyword>
<keyword id="KW-1185">Reference proteome</keyword>
<keyword id="KW-0832">Ubl conjugation</keyword>
<dbReference type="EMBL" id="AY176045">
    <property type="protein sequence ID" value="AAO46889.1"/>
    <property type="molecule type" value="mRNA"/>
</dbReference>
<dbReference type="EMBL" id="AB014542">
    <property type="protein sequence ID" value="BAA31617.2"/>
    <property type="status" value="ALT_INIT"/>
    <property type="molecule type" value="mRNA"/>
</dbReference>
<dbReference type="EMBL" id="BX538172">
    <property type="status" value="NOT_ANNOTATED_CDS"/>
    <property type="molecule type" value="mRNA"/>
</dbReference>
<dbReference type="EMBL" id="AK001739">
    <property type="protein sequence ID" value="BAA91873.1"/>
    <property type="status" value="ALT_SEQ"/>
    <property type="molecule type" value="mRNA"/>
</dbReference>
<dbReference type="EMBL" id="BX537885">
    <property type="protein sequence ID" value="CAD97881.1"/>
    <property type="molecule type" value="mRNA"/>
</dbReference>
<dbReference type="EMBL" id="BX538321">
    <property type="protein sequence ID" value="CAD98095.1"/>
    <property type="molecule type" value="mRNA"/>
</dbReference>
<dbReference type="EMBL" id="AC016692">
    <property type="status" value="NOT_ANNOTATED_CDS"/>
    <property type="molecule type" value="Genomic_DNA"/>
</dbReference>
<dbReference type="EMBL" id="AC064852">
    <property type="status" value="NOT_ANNOTATED_CDS"/>
    <property type="molecule type" value="Genomic_DNA"/>
</dbReference>
<dbReference type="EMBL" id="CH471063">
    <property type="protein sequence ID" value="EAW71016.1"/>
    <property type="molecule type" value="Genomic_DNA"/>
</dbReference>
<dbReference type="EMBL" id="BC008072">
    <property type="protein sequence ID" value="AAH08072.2"/>
    <property type="molecule type" value="mRNA"/>
</dbReference>
<dbReference type="EMBL" id="BC136251">
    <property type="protein sequence ID" value="AAI36252.1"/>
    <property type="molecule type" value="mRNA"/>
</dbReference>
<dbReference type="EMBL" id="BC146775">
    <property type="protein sequence ID" value="AAI46776.1"/>
    <property type="molecule type" value="mRNA"/>
</dbReference>
<dbReference type="CCDS" id="CCDS33401.1">
    <molecule id="Q6Y7W6-1"/>
</dbReference>
<dbReference type="CCDS" id="CCDS46542.1">
    <molecule id="Q6Y7W6-3"/>
</dbReference>
<dbReference type="CCDS" id="CCDS46543.1">
    <molecule id="Q6Y7W6-5"/>
</dbReference>
<dbReference type="PIR" id="T00377">
    <property type="entry name" value="T00377"/>
</dbReference>
<dbReference type="RefSeq" id="NP_001096616.1">
    <molecule id="Q6Y7W6-1"/>
    <property type="nucleotide sequence ID" value="NM_001103146.3"/>
</dbReference>
<dbReference type="RefSeq" id="NP_001096617.1">
    <molecule id="Q6Y7W6-3"/>
    <property type="nucleotide sequence ID" value="NM_001103147.2"/>
</dbReference>
<dbReference type="RefSeq" id="NP_001096618.1">
    <molecule id="Q6Y7W6-5"/>
    <property type="nucleotide sequence ID" value="NM_001103148.2"/>
</dbReference>
<dbReference type="RefSeq" id="NP_056390.2">
    <molecule id="Q6Y7W6-1"/>
    <property type="nucleotide sequence ID" value="NM_015575.3"/>
</dbReference>
<dbReference type="PDB" id="5NVL">
    <property type="method" value="X-ray"/>
    <property type="resolution" value="2.30 A"/>
    <property type="chains" value="B/D=35-105"/>
</dbReference>
<dbReference type="PDB" id="5NVM">
    <property type="method" value="X-ray"/>
    <property type="resolution" value="2.00 A"/>
    <property type="chains" value="B/D=35-72"/>
</dbReference>
<dbReference type="PDB" id="7RUP">
    <property type="method" value="X-ray"/>
    <property type="resolution" value="1.23 A"/>
    <property type="chains" value="A=529-597"/>
</dbReference>
<dbReference type="PDBsum" id="5NVL"/>
<dbReference type="PDBsum" id="5NVM"/>
<dbReference type="PDBsum" id="7RUP"/>
<dbReference type="SMR" id="Q6Y7W6"/>
<dbReference type="BioGRID" id="117520">
    <property type="interactions" value="283"/>
</dbReference>
<dbReference type="ComplexPortal" id="CPX-2332">
    <property type="entry name" value="4EHP-GIGYF2 co-translational mRNA decay complex, ZNF598 variant"/>
</dbReference>
<dbReference type="ComplexPortal" id="CPX-2338">
    <property type="entry name" value="4EHP-GIGYF2 co-translational mRNA decay complex, DDX6 variant"/>
</dbReference>
<dbReference type="CORUM" id="Q6Y7W6"/>
<dbReference type="FunCoup" id="Q6Y7W6">
    <property type="interactions" value="3093"/>
</dbReference>
<dbReference type="IntAct" id="Q6Y7W6">
    <property type="interactions" value="98"/>
</dbReference>
<dbReference type="MINT" id="Q6Y7W6"/>
<dbReference type="STRING" id="9606.ENSP00000387170"/>
<dbReference type="BindingDB" id="Q6Y7W6"/>
<dbReference type="ChEMBL" id="CHEMBL2331055"/>
<dbReference type="GlyCosmos" id="Q6Y7W6">
    <property type="glycosylation" value="3 sites, 1 glycan"/>
</dbReference>
<dbReference type="GlyGen" id="Q6Y7W6">
    <property type="glycosylation" value="9 sites, 1 N-linked glycan (1 site), 1 O-linked glycan (7 sites)"/>
</dbReference>
<dbReference type="iPTMnet" id="Q6Y7W6"/>
<dbReference type="MetOSite" id="Q6Y7W6"/>
<dbReference type="PhosphoSitePlus" id="Q6Y7W6"/>
<dbReference type="BioMuta" id="GIGYF2"/>
<dbReference type="DMDM" id="74710467"/>
<dbReference type="CPTAC" id="CPTAC-969"/>
<dbReference type="jPOST" id="Q6Y7W6"/>
<dbReference type="MassIVE" id="Q6Y7W6"/>
<dbReference type="PaxDb" id="9606-ENSP00000387170"/>
<dbReference type="PeptideAtlas" id="Q6Y7W6"/>
<dbReference type="ProteomicsDB" id="19183"/>
<dbReference type="ProteomicsDB" id="67836">
    <molecule id="Q6Y7W6-1"/>
</dbReference>
<dbReference type="ProteomicsDB" id="67837">
    <molecule id="Q6Y7W6-3"/>
</dbReference>
<dbReference type="Pumba" id="Q6Y7W6"/>
<dbReference type="Antibodypedia" id="62944">
    <property type="antibodies" value="87 antibodies from 25 providers"/>
</dbReference>
<dbReference type="DNASU" id="26058"/>
<dbReference type="Ensembl" id="ENST00000373563.9">
    <molecule id="Q6Y7W6-1"/>
    <property type="protein sequence ID" value="ENSP00000362664.5"/>
    <property type="gene ID" value="ENSG00000204120.16"/>
</dbReference>
<dbReference type="Ensembl" id="ENST00000409196.7">
    <molecule id="Q6Y7W6-5"/>
    <property type="protein sequence ID" value="ENSP00000387070.3"/>
    <property type="gene ID" value="ENSG00000204120.16"/>
</dbReference>
<dbReference type="Ensembl" id="ENST00000409451.7">
    <molecule id="Q6Y7W6-3"/>
    <property type="protein sequence ID" value="ENSP00000387170.3"/>
    <property type="gene ID" value="ENSG00000204120.16"/>
</dbReference>
<dbReference type="Ensembl" id="ENST00000409547.5">
    <molecule id="Q6Y7W6-1"/>
    <property type="protein sequence ID" value="ENSP00000386537.1"/>
    <property type="gene ID" value="ENSG00000204120.16"/>
</dbReference>
<dbReference type="GeneID" id="26058"/>
<dbReference type="KEGG" id="hsa:26058"/>
<dbReference type="MANE-Select" id="ENST00000373563.9">
    <property type="protein sequence ID" value="ENSP00000362664.5"/>
    <property type="RefSeq nucleotide sequence ID" value="NM_001103146.3"/>
    <property type="RefSeq protein sequence ID" value="NP_001096616.1"/>
</dbReference>
<dbReference type="UCSC" id="uc002vth.6">
    <molecule id="Q6Y7W6-1"/>
    <property type="organism name" value="human"/>
</dbReference>
<dbReference type="AGR" id="HGNC:11960"/>
<dbReference type="CTD" id="26058"/>
<dbReference type="DisGeNET" id="26058"/>
<dbReference type="GeneCards" id="GIGYF2"/>
<dbReference type="HGNC" id="HGNC:11960">
    <property type="gene designation" value="GIGYF2"/>
</dbReference>
<dbReference type="HPA" id="ENSG00000204120">
    <property type="expression patterns" value="Low tissue specificity"/>
</dbReference>
<dbReference type="MalaCards" id="GIGYF2"/>
<dbReference type="MIM" id="607688">
    <property type="type" value="phenotype"/>
</dbReference>
<dbReference type="MIM" id="612003">
    <property type="type" value="gene"/>
</dbReference>
<dbReference type="neXtProt" id="NX_Q6Y7W6"/>
<dbReference type="OpenTargets" id="ENSG00000204120"/>
<dbReference type="Orphanet" id="411602">
    <property type="disease" value="Hereditary late-onset Parkinson disease"/>
</dbReference>
<dbReference type="PharmGKB" id="PA36647"/>
<dbReference type="VEuPathDB" id="HostDB:ENSG00000204120"/>
<dbReference type="eggNOG" id="KOG1862">
    <property type="taxonomic scope" value="Eukaryota"/>
</dbReference>
<dbReference type="GeneTree" id="ENSGT00940000156108"/>
<dbReference type="HOGENOM" id="CLU_007300_0_0_1"/>
<dbReference type="InParanoid" id="Q6Y7W6"/>
<dbReference type="OMA" id="QNRICLQ"/>
<dbReference type="OrthoDB" id="9539369at2759"/>
<dbReference type="PAN-GO" id="Q6Y7W6">
    <property type="GO annotations" value="6 GO annotations based on evolutionary models"/>
</dbReference>
<dbReference type="PhylomeDB" id="Q6Y7W6"/>
<dbReference type="TreeFam" id="TF325513"/>
<dbReference type="PathwayCommons" id="Q6Y7W6"/>
<dbReference type="SignaLink" id="Q6Y7W6"/>
<dbReference type="SIGNOR" id="Q6Y7W6"/>
<dbReference type="BioGRID-ORCS" id="26058">
    <property type="hits" value="91 hits in 1193 CRISPR screens"/>
</dbReference>
<dbReference type="CD-CODE" id="232F8A39">
    <property type="entry name" value="P-body"/>
</dbReference>
<dbReference type="CD-CODE" id="DEE660B4">
    <property type="entry name" value="Stress granule"/>
</dbReference>
<dbReference type="ChiTaRS" id="GIGYF2">
    <property type="organism name" value="human"/>
</dbReference>
<dbReference type="GeneWiki" id="TNRC15"/>
<dbReference type="GenomeRNAi" id="26058"/>
<dbReference type="Pharos" id="Q6Y7W6">
    <property type="development level" value="Tchem"/>
</dbReference>
<dbReference type="PRO" id="PR:Q6Y7W6"/>
<dbReference type="Proteomes" id="UP000005640">
    <property type="component" value="Chromosome 2"/>
</dbReference>
<dbReference type="RNAct" id="Q6Y7W6">
    <property type="molecule type" value="protein"/>
</dbReference>
<dbReference type="Bgee" id="ENSG00000204120">
    <property type="expression patterns" value="Expressed in calcaneal tendon and 211 other cell types or tissues"/>
</dbReference>
<dbReference type="ExpressionAtlas" id="Q6Y7W6">
    <property type="expression patterns" value="baseline and differential"/>
</dbReference>
<dbReference type="GO" id="GO:0010494">
    <property type="term" value="C:cytoplasmic stress granule"/>
    <property type="evidence" value="ECO:0000314"/>
    <property type="project" value="ParkinsonsUK-UCL"/>
</dbReference>
<dbReference type="GO" id="GO:0005829">
    <property type="term" value="C:cytosol"/>
    <property type="evidence" value="ECO:0000314"/>
    <property type="project" value="HPA"/>
</dbReference>
<dbReference type="GO" id="GO:0005783">
    <property type="term" value="C:endoplasmic reticulum"/>
    <property type="evidence" value="ECO:0000314"/>
    <property type="project" value="ParkinsonsUK-UCL"/>
</dbReference>
<dbReference type="GO" id="GO:0005768">
    <property type="term" value="C:endosome"/>
    <property type="evidence" value="ECO:0000314"/>
    <property type="project" value="ParkinsonsUK-UCL"/>
</dbReference>
<dbReference type="GO" id="GO:0005794">
    <property type="term" value="C:Golgi apparatus"/>
    <property type="evidence" value="ECO:0000314"/>
    <property type="project" value="ParkinsonsUK-UCL"/>
</dbReference>
<dbReference type="GO" id="GO:0016020">
    <property type="term" value="C:membrane"/>
    <property type="evidence" value="ECO:0007005"/>
    <property type="project" value="UniProtKB"/>
</dbReference>
<dbReference type="GO" id="GO:0043204">
    <property type="term" value="C:perikaryon"/>
    <property type="evidence" value="ECO:0000314"/>
    <property type="project" value="ParkinsonsUK-UCL"/>
</dbReference>
<dbReference type="GO" id="GO:0032991">
    <property type="term" value="C:protein-containing complex"/>
    <property type="evidence" value="ECO:0000314"/>
    <property type="project" value="UniProtKB"/>
</dbReference>
<dbReference type="GO" id="GO:1990635">
    <property type="term" value="C:proximal dendrite"/>
    <property type="evidence" value="ECO:0000314"/>
    <property type="project" value="ParkinsonsUK-UCL"/>
</dbReference>
<dbReference type="GO" id="GO:0031982">
    <property type="term" value="C:vesicle"/>
    <property type="evidence" value="ECO:0000318"/>
    <property type="project" value="GO_Central"/>
</dbReference>
<dbReference type="GO" id="GO:0045296">
    <property type="term" value="F:cadherin binding"/>
    <property type="evidence" value="ECO:0007005"/>
    <property type="project" value="BHF-UCL"/>
</dbReference>
<dbReference type="GO" id="GO:0060090">
    <property type="term" value="F:molecular adaptor activity"/>
    <property type="evidence" value="ECO:0000314"/>
    <property type="project" value="UniProt"/>
</dbReference>
<dbReference type="GO" id="GO:0070064">
    <property type="term" value="F:proline-rich region binding"/>
    <property type="evidence" value="ECO:0000314"/>
    <property type="project" value="ParkinsonsUK-UCL"/>
</dbReference>
<dbReference type="GO" id="GO:0003723">
    <property type="term" value="F:RNA binding"/>
    <property type="evidence" value="ECO:0007005"/>
    <property type="project" value="UniProtKB"/>
</dbReference>
<dbReference type="GO" id="GO:0008344">
    <property type="term" value="P:adult locomotory behavior"/>
    <property type="evidence" value="ECO:0007669"/>
    <property type="project" value="Ensembl"/>
</dbReference>
<dbReference type="GO" id="GO:0007631">
    <property type="term" value="P:feeding behavior"/>
    <property type="evidence" value="ECO:0007669"/>
    <property type="project" value="Ensembl"/>
</dbReference>
<dbReference type="GO" id="GO:0048873">
    <property type="term" value="P:homeostasis of number of cells within a tissue"/>
    <property type="evidence" value="ECO:0007669"/>
    <property type="project" value="Ensembl"/>
</dbReference>
<dbReference type="GO" id="GO:0048009">
    <property type="term" value="P:insulin-like growth factor receptor signaling pathway"/>
    <property type="evidence" value="ECO:0000315"/>
    <property type="project" value="ParkinsonsUK-UCL"/>
</dbReference>
<dbReference type="GO" id="GO:0031571">
    <property type="term" value="P:mitotic G1 DNA damage checkpoint signaling"/>
    <property type="evidence" value="ECO:0007669"/>
    <property type="project" value="Ensembl"/>
</dbReference>
<dbReference type="GO" id="GO:0061157">
    <property type="term" value="P:mRNA destabilization"/>
    <property type="evidence" value="ECO:0000314"/>
    <property type="project" value="ParkinsonsUK-UCL"/>
</dbReference>
<dbReference type="GO" id="GO:0035264">
    <property type="term" value="P:multicellular organism growth"/>
    <property type="evidence" value="ECO:0007669"/>
    <property type="project" value="Ensembl"/>
</dbReference>
<dbReference type="GO" id="GO:0050881">
    <property type="term" value="P:musculoskeletal movement"/>
    <property type="evidence" value="ECO:0007669"/>
    <property type="project" value="Ensembl"/>
</dbReference>
<dbReference type="GO" id="GO:0017148">
    <property type="term" value="P:negative regulation of translation"/>
    <property type="evidence" value="ECO:0000315"/>
    <property type="project" value="MGI"/>
</dbReference>
<dbReference type="GO" id="GO:0045947">
    <property type="term" value="P:negative regulation of translational initiation"/>
    <property type="evidence" value="ECO:0000314"/>
    <property type="project" value="UniProt"/>
</dbReference>
<dbReference type="GO" id="GO:0060339">
    <property type="term" value="P:negative regulation of type I interferon-mediated signaling pathway"/>
    <property type="evidence" value="ECO:0000314"/>
    <property type="project" value="UniProt"/>
</dbReference>
<dbReference type="GO" id="GO:0050885">
    <property type="term" value="P:neuromuscular process controlling balance"/>
    <property type="evidence" value="ECO:0007669"/>
    <property type="project" value="Ensembl"/>
</dbReference>
<dbReference type="GO" id="GO:0009791">
    <property type="term" value="P:post-embryonic development"/>
    <property type="evidence" value="ECO:0007669"/>
    <property type="project" value="Ensembl"/>
</dbReference>
<dbReference type="GO" id="GO:0016441">
    <property type="term" value="P:post-transcriptional gene silencing"/>
    <property type="evidence" value="ECO:0000314"/>
    <property type="project" value="ParkinsonsUK-UCL"/>
</dbReference>
<dbReference type="GO" id="GO:0072344">
    <property type="term" value="P:rescue of stalled ribosome"/>
    <property type="evidence" value="ECO:0000314"/>
    <property type="project" value="UniProt"/>
</dbReference>
<dbReference type="GO" id="GO:0021522">
    <property type="term" value="P:spinal cord motor neuron differentiation"/>
    <property type="evidence" value="ECO:0007669"/>
    <property type="project" value="Ensembl"/>
</dbReference>
<dbReference type="CDD" id="cd00072">
    <property type="entry name" value="GYF"/>
    <property type="match status" value="1"/>
</dbReference>
<dbReference type="FunFam" id="3.30.1490.40:FF:000001">
    <property type="entry name" value="GRB10-interacting GYF protein 2 isoform X1"/>
    <property type="match status" value="1"/>
</dbReference>
<dbReference type="Gene3D" id="3.30.1490.40">
    <property type="match status" value="1"/>
</dbReference>
<dbReference type="InterPro" id="IPR051640">
    <property type="entry name" value="GRB10-interact_GYF"/>
</dbReference>
<dbReference type="InterPro" id="IPR003169">
    <property type="entry name" value="GYF"/>
</dbReference>
<dbReference type="InterPro" id="IPR035445">
    <property type="entry name" value="GYF-like_dom_sf"/>
</dbReference>
<dbReference type="PANTHER" id="PTHR14445">
    <property type="entry name" value="GRB10 INTERACTING GYF PROTEIN"/>
    <property type="match status" value="1"/>
</dbReference>
<dbReference type="PANTHER" id="PTHR14445:SF38">
    <property type="entry name" value="GRB10-INTERACTING GYF PROTEIN 2"/>
    <property type="match status" value="1"/>
</dbReference>
<dbReference type="Pfam" id="PF02213">
    <property type="entry name" value="GYF"/>
    <property type="match status" value="1"/>
</dbReference>
<dbReference type="SMART" id="SM00444">
    <property type="entry name" value="GYF"/>
    <property type="match status" value="1"/>
</dbReference>
<dbReference type="SUPFAM" id="SSF55277">
    <property type="entry name" value="GYF domain"/>
    <property type="match status" value="1"/>
</dbReference>
<dbReference type="PROSITE" id="PS50829">
    <property type="entry name" value="GYF"/>
    <property type="match status" value="1"/>
</dbReference>
<name>GGYF2_HUMAN</name>
<proteinExistence type="evidence at protein level"/>
<protein>
    <recommendedName>
        <fullName evidence="23">GRB10-interacting GYF protein 2</fullName>
    </recommendedName>
    <alternativeName>
        <fullName>PERQ amino acid-rich with GYF domain-containing protein 2</fullName>
    </alternativeName>
    <alternativeName>
        <fullName evidence="25">Trinucleotide repeat-containing gene 15 protein</fullName>
    </alternativeName>
</protein>
<evidence type="ECO:0000250" key="1"/>
<evidence type="ECO:0000250" key="2">
    <source>
        <dbReference type="UniProtKB" id="Q6Y7W8"/>
    </source>
</evidence>
<evidence type="ECO:0000255" key="3">
    <source>
        <dbReference type="PROSITE-ProRule" id="PRU00101"/>
    </source>
</evidence>
<evidence type="ECO:0000256" key="4">
    <source>
        <dbReference type="SAM" id="MobiDB-lite"/>
    </source>
</evidence>
<evidence type="ECO:0000269" key="5">
    <source>
    </source>
</evidence>
<evidence type="ECO:0000269" key="6">
    <source>
    </source>
</evidence>
<evidence type="ECO:0000269" key="7">
    <source>
    </source>
</evidence>
<evidence type="ECO:0000269" key="8">
    <source>
    </source>
</evidence>
<evidence type="ECO:0000269" key="9">
    <source>
    </source>
</evidence>
<evidence type="ECO:0000269" key="10">
    <source>
    </source>
</evidence>
<evidence type="ECO:0000269" key="11">
    <source>
    </source>
</evidence>
<evidence type="ECO:0000269" key="12">
    <source>
    </source>
</evidence>
<evidence type="ECO:0000269" key="13">
    <source>
    </source>
</evidence>
<evidence type="ECO:0000269" key="14">
    <source>
    </source>
</evidence>
<evidence type="ECO:0000269" key="15">
    <source>
    </source>
</evidence>
<evidence type="ECO:0000269" key="16">
    <source>
    </source>
</evidence>
<evidence type="ECO:0000269" key="17">
    <source>
    </source>
</evidence>
<evidence type="ECO:0000269" key="18">
    <source>
    </source>
</evidence>
<evidence type="ECO:0000269" key="19">
    <source>
    </source>
</evidence>
<evidence type="ECO:0000269" key="20">
    <source>
    </source>
</evidence>
<evidence type="ECO:0000269" key="21">
    <source>
    </source>
</evidence>
<evidence type="ECO:0000269" key="22">
    <source ref="8"/>
</evidence>
<evidence type="ECO:0000303" key="23">
    <source>
    </source>
</evidence>
<evidence type="ECO:0000303" key="24">
    <source>
    </source>
</evidence>
<evidence type="ECO:0000303" key="25">
    <source>
    </source>
</evidence>
<evidence type="ECO:0000303" key="26">
    <source>
    </source>
</evidence>
<evidence type="ECO:0000303" key="27">
    <source ref="4"/>
</evidence>
<evidence type="ECO:0000305" key="28"/>
<evidence type="ECO:0000312" key="29">
    <source>
        <dbReference type="HGNC" id="HGNC:11960"/>
    </source>
</evidence>
<evidence type="ECO:0007744" key="30">
    <source>
    </source>
</evidence>
<evidence type="ECO:0007744" key="31">
    <source>
    </source>
</evidence>
<evidence type="ECO:0007744" key="32">
    <source>
    </source>
</evidence>
<evidence type="ECO:0007744" key="33">
    <source>
    </source>
</evidence>
<evidence type="ECO:0007744" key="34">
    <source>
    </source>
</evidence>
<evidence type="ECO:0007744" key="35">
    <source>
    </source>
</evidence>
<evidence type="ECO:0007744" key="36">
    <source>
    </source>
</evidence>
<evidence type="ECO:0007744" key="37">
    <source>
    </source>
</evidence>
<evidence type="ECO:0007744" key="38">
    <source>
    </source>
</evidence>
<evidence type="ECO:0007744" key="39">
    <source>
    </source>
</evidence>
<evidence type="ECO:0007744" key="40">
    <source>
    </source>
</evidence>
<evidence type="ECO:0007829" key="41">
    <source>
        <dbReference type="PDB" id="5NVL"/>
    </source>
</evidence>
<evidence type="ECO:0007829" key="42">
    <source>
        <dbReference type="PDB" id="5NVM"/>
    </source>
</evidence>
<evidence type="ECO:0007829" key="43">
    <source>
        <dbReference type="PDB" id="7RUP"/>
    </source>
</evidence>